<gene>
    <name evidence="2" type="primary">bioH</name>
    <name type="ordered locus">SbBS512_E3793</name>
</gene>
<keyword id="KW-0093">Biotin biosynthesis</keyword>
<keyword id="KW-0963">Cytoplasm</keyword>
<keyword id="KW-0378">Hydrolase</keyword>
<keyword id="KW-1185">Reference proteome</keyword>
<keyword id="KW-0719">Serine esterase</keyword>
<dbReference type="EC" id="3.1.1.85" evidence="2"/>
<dbReference type="EMBL" id="CP001063">
    <property type="protein sequence ID" value="ACD09485.1"/>
    <property type="molecule type" value="Genomic_DNA"/>
</dbReference>
<dbReference type="RefSeq" id="WP_001060056.1">
    <property type="nucleotide sequence ID" value="NC_010658.1"/>
</dbReference>
<dbReference type="SMR" id="B2U3M2"/>
<dbReference type="STRING" id="344609.SbBS512_E3793"/>
<dbReference type="ESTHER" id="shifl-BIOH">
    <property type="family name" value="BioH"/>
</dbReference>
<dbReference type="GeneID" id="93778584"/>
<dbReference type="KEGG" id="sbc:SbBS512_E3793"/>
<dbReference type="HOGENOM" id="CLU_020336_12_2_6"/>
<dbReference type="UniPathway" id="UPA00078"/>
<dbReference type="Proteomes" id="UP000001030">
    <property type="component" value="Chromosome"/>
</dbReference>
<dbReference type="GO" id="GO:0005737">
    <property type="term" value="C:cytoplasm"/>
    <property type="evidence" value="ECO:0007669"/>
    <property type="project" value="UniProtKB-SubCell"/>
</dbReference>
<dbReference type="GO" id="GO:0090499">
    <property type="term" value="F:pimelyl-[acyl-carrier protein] methyl ester esterase activity"/>
    <property type="evidence" value="ECO:0007669"/>
    <property type="project" value="UniProtKB-EC"/>
</dbReference>
<dbReference type="GO" id="GO:0009102">
    <property type="term" value="P:biotin biosynthetic process"/>
    <property type="evidence" value="ECO:0007669"/>
    <property type="project" value="UniProtKB-UniRule"/>
</dbReference>
<dbReference type="FunFam" id="3.40.50.1820:FF:000045">
    <property type="entry name" value="Pimeloyl-[acyl-carrier protein] methyl ester esterase"/>
    <property type="match status" value="1"/>
</dbReference>
<dbReference type="Gene3D" id="3.40.50.1820">
    <property type="entry name" value="alpha/beta hydrolase"/>
    <property type="match status" value="1"/>
</dbReference>
<dbReference type="HAMAP" id="MF_01260">
    <property type="entry name" value="Carboxylester"/>
    <property type="match status" value="1"/>
</dbReference>
<dbReference type="InterPro" id="IPR000073">
    <property type="entry name" value="AB_hydrolase_1"/>
</dbReference>
<dbReference type="InterPro" id="IPR029058">
    <property type="entry name" value="AB_hydrolase_fold"/>
</dbReference>
<dbReference type="InterPro" id="IPR010076">
    <property type="entry name" value="BioH"/>
</dbReference>
<dbReference type="InterPro" id="IPR050228">
    <property type="entry name" value="Carboxylesterase_BioH"/>
</dbReference>
<dbReference type="NCBIfam" id="TIGR01738">
    <property type="entry name" value="bioH"/>
    <property type="match status" value="1"/>
</dbReference>
<dbReference type="NCBIfam" id="NF007674">
    <property type="entry name" value="PRK10349.1"/>
    <property type="match status" value="1"/>
</dbReference>
<dbReference type="PANTHER" id="PTHR43194">
    <property type="entry name" value="HYDROLASE ALPHA/BETA FOLD FAMILY"/>
    <property type="match status" value="1"/>
</dbReference>
<dbReference type="PANTHER" id="PTHR43194:SF5">
    <property type="entry name" value="PIMELOYL-[ACYL-CARRIER PROTEIN] METHYL ESTER ESTERASE"/>
    <property type="match status" value="1"/>
</dbReference>
<dbReference type="Pfam" id="PF00561">
    <property type="entry name" value="Abhydrolase_1"/>
    <property type="match status" value="1"/>
</dbReference>
<dbReference type="SUPFAM" id="SSF53474">
    <property type="entry name" value="alpha/beta-Hydrolases"/>
    <property type="match status" value="1"/>
</dbReference>
<organism>
    <name type="scientific">Shigella boydii serotype 18 (strain CDC 3083-94 / BS512)</name>
    <dbReference type="NCBI Taxonomy" id="344609"/>
    <lineage>
        <taxon>Bacteria</taxon>
        <taxon>Pseudomonadati</taxon>
        <taxon>Pseudomonadota</taxon>
        <taxon>Gammaproteobacteria</taxon>
        <taxon>Enterobacterales</taxon>
        <taxon>Enterobacteriaceae</taxon>
        <taxon>Shigella</taxon>
    </lineage>
</organism>
<protein>
    <recommendedName>
        <fullName evidence="2">Pimeloyl-[acyl-carrier protein] methyl ester esterase</fullName>
        <ecNumber evidence="2">3.1.1.85</ecNumber>
    </recommendedName>
    <alternativeName>
        <fullName evidence="2">Biotin synthesis protein BioH</fullName>
    </alternativeName>
    <alternativeName>
        <fullName evidence="2">Carboxylesterase BioH</fullName>
    </alternativeName>
</protein>
<feature type="chain" id="PRO_1000140005" description="Pimeloyl-[acyl-carrier protein] methyl ester esterase">
    <location>
        <begin position="1"/>
        <end position="256"/>
    </location>
</feature>
<feature type="domain" description="AB hydrolase-1" evidence="1">
    <location>
        <begin position="15"/>
        <end position="242"/>
    </location>
</feature>
<feature type="active site" description="Nucleophile" evidence="2">
    <location>
        <position position="82"/>
    </location>
</feature>
<feature type="active site" evidence="2">
    <location>
        <position position="207"/>
    </location>
</feature>
<feature type="active site" evidence="2">
    <location>
        <position position="235"/>
    </location>
</feature>
<feature type="binding site" evidence="2">
    <location>
        <position position="22"/>
    </location>
    <ligand>
        <name>substrate</name>
    </ligand>
</feature>
<feature type="binding site" evidence="2">
    <location>
        <begin position="82"/>
        <end position="83"/>
    </location>
    <ligand>
        <name>substrate</name>
    </ligand>
</feature>
<feature type="binding site" evidence="2">
    <location>
        <begin position="143"/>
        <end position="147"/>
    </location>
    <ligand>
        <name>substrate</name>
    </ligand>
</feature>
<feature type="binding site" evidence="2">
    <location>
        <position position="235"/>
    </location>
    <ligand>
        <name>substrate</name>
    </ligand>
</feature>
<comment type="function">
    <text evidence="2">The physiological role of BioH is to remove the methyl group introduced by BioC when the pimeloyl moiety is complete. It allows to synthesize pimeloyl-ACP via the fatty acid synthetic pathway through the hydrolysis of the ester bonds of pimeloyl-ACP esters.</text>
</comment>
<comment type="catalytic activity">
    <reaction evidence="2">
        <text>6-carboxyhexanoyl-[ACP] methyl ester + H2O = 6-carboxyhexanoyl-[ACP] + methanol + H(+)</text>
        <dbReference type="Rhea" id="RHEA:42700"/>
        <dbReference type="Rhea" id="RHEA-COMP:9955"/>
        <dbReference type="Rhea" id="RHEA-COMP:10186"/>
        <dbReference type="ChEBI" id="CHEBI:15377"/>
        <dbReference type="ChEBI" id="CHEBI:15378"/>
        <dbReference type="ChEBI" id="CHEBI:17790"/>
        <dbReference type="ChEBI" id="CHEBI:78846"/>
        <dbReference type="ChEBI" id="CHEBI:82735"/>
        <dbReference type="EC" id="3.1.1.85"/>
    </reaction>
</comment>
<comment type="pathway">
    <text evidence="2">Cofactor biosynthesis; biotin biosynthesis.</text>
</comment>
<comment type="subunit">
    <text evidence="2">Monomer.</text>
</comment>
<comment type="subcellular location">
    <subcellularLocation>
        <location evidence="2">Cytoplasm</location>
    </subcellularLocation>
</comment>
<comment type="similarity">
    <text evidence="2">Belongs to the AB hydrolase superfamily. Carboxylesterase BioH family.</text>
</comment>
<reference key="1">
    <citation type="submission" date="2008-05" db="EMBL/GenBank/DDBJ databases">
        <title>Complete sequence of Shigella boydii serotype 18 strain BS512.</title>
        <authorList>
            <person name="Rasko D.A."/>
            <person name="Rosovitz M."/>
            <person name="Maurelli A.T."/>
            <person name="Myers G."/>
            <person name="Seshadri R."/>
            <person name="Cer R."/>
            <person name="Jiang L."/>
            <person name="Ravel J."/>
            <person name="Sebastian Y."/>
        </authorList>
    </citation>
    <scope>NUCLEOTIDE SEQUENCE [LARGE SCALE GENOMIC DNA]</scope>
    <source>
        <strain>CDC 3083-94 / BS512</strain>
    </source>
</reference>
<proteinExistence type="inferred from homology"/>
<name>BIOH_SHIB3</name>
<accession>B2U3M2</accession>
<evidence type="ECO:0000255" key="1"/>
<evidence type="ECO:0000255" key="2">
    <source>
        <dbReference type="HAMAP-Rule" id="MF_01260"/>
    </source>
</evidence>
<sequence length="256" mass="28519">MNNIWWQTKGQGNVHLVLLHGWGLNAEVWRCIDEELSSHFTLHLVDLPGFGRSQGFGALSLADMAEAVLQQAPDKAIWLGWSLGGLVASQIALTHPERVQALVTVASSPCFSARDDWPGIKPDVLAGFQQQLSDDFQRTVERFLALQTMGTETARQDARALKKTVLALPMPEVDVLNGGLEILKTVDLRQPLQNVPMPFLRLYGYLDGLVPRKVVPMLDKLWPRSKSYIFAKAAHAPFISHPVEFCHLLVALKQRV</sequence>